<organism>
    <name type="scientific">Bantua robusta</name>
    <name type="common">African bullet roach</name>
    <dbReference type="NCBI Taxonomy" id="344686"/>
    <lineage>
        <taxon>Eukaryota</taxon>
        <taxon>Metazoa</taxon>
        <taxon>Ecdysozoa</taxon>
        <taxon>Arthropoda</taxon>
        <taxon>Hexapoda</taxon>
        <taxon>Insecta</taxon>
        <taxon>Pterygota</taxon>
        <taxon>Neoptera</taxon>
        <taxon>Polyneoptera</taxon>
        <taxon>Dictyoptera</taxon>
        <taxon>Blattodea</taxon>
        <taxon>Blaberoidea</taxon>
        <taxon>Blaberidae</taxon>
        <taxon>Perisphaerinae</taxon>
        <taxon>Bantua</taxon>
    </lineage>
</organism>
<evidence type="ECO:0000255" key="1"/>
<evidence type="ECO:0000269" key="2">
    <source>
    </source>
</evidence>
<evidence type="ECO:0000303" key="3">
    <source>
    </source>
</evidence>
<evidence type="ECO:0000305" key="4"/>
<feature type="peptide" id="PRO_0000378818" description="Periviscerokinin-3" evidence="2">
    <location>
        <begin position="1"/>
        <end position="11"/>
    </location>
</feature>
<feature type="modified residue" description="Valine amide" evidence="2">
    <location>
        <position position="11"/>
    </location>
</feature>
<dbReference type="GO" id="GO:0005576">
    <property type="term" value="C:extracellular region"/>
    <property type="evidence" value="ECO:0007669"/>
    <property type="project" value="UniProtKB-SubCell"/>
</dbReference>
<dbReference type="GO" id="GO:0007218">
    <property type="term" value="P:neuropeptide signaling pathway"/>
    <property type="evidence" value="ECO:0007669"/>
    <property type="project" value="UniProtKB-KW"/>
</dbReference>
<dbReference type="InterPro" id="IPR013231">
    <property type="entry name" value="Periviscerokinin"/>
</dbReference>
<dbReference type="Pfam" id="PF08259">
    <property type="entry name" value="Periviscerokin"/>
    <property type="match status" value="1"/>
</dbReference>
<accession>P85541</accession>
<name>PVK3_BANRO</name>
<sequence length="11" mass="1147">GSSGMIPFPRV</sequence>
<comment type="function">
    <text evidence="4">Mediates visceral muscle contractile activity (myotropic activity).</text>
</comment>
<comment type="subcellular location">
    <subcellularLocation>
        <location evidence="4">Secreted</location>
    </subcellularLocation>
</comment>
<comment type="similarity">
    <text evidence="1">Belongs to the periviscerokinin family.</text>
</comment>
<protein>
    <recommendedName>
        <fullName evidence="3">Periviscerokinin-3</fullName>
        <shortName evidence="3">BanRo-PVK-3</shortName>
    </recommendedName>
</protein>
<proteinExistence type="evidence at protein level"/>
<reference evidence="4" key="1">
    <citation type="journal article" date="2009" name="BMC Evol. Biol.">
        <title>A proteomic approach for studying insect phylogeny: CAPA peptides of ancient insect taxa (Dictyoptera, Blattoptera) as a test case.</title>
        <authorList>
            <person name="Roth S."/>
            <person name="Fromm B."/>
            <person name="Gaede G."/>
            <person name="Predel R."/>
        </authorList>
    </citation>
    <scope>PROTEIN SEQUENCE</scope>
    <scope>AMIDATION AT VAL-11</scope>
    <source>
        <tissue evidence="2">Abdominal perisympathetic organs</tissue>
    </source>
</reference>
<keyword id="KW-0027">Amidation</keyword>
<keyword id="KW-0903">Direct protein sequencing</keyword>
<keyword id="KW-0527">Neuropeptide</keyword>
<keyword id="KW-0964">Secreted</keyword>